<feature type="peptide" id="PRO_0000419734" description="CAPA-Periviscerokinin-2" evidence="3">
    <location>
        <begin position="1"/>
        <end position="9"/>
    </location>
</feature>
<feature type="modified residue" description="Leucine amide" evidence="3">
    <location>
        <position position="9"/>
    </location>
</feature>
<feature type="unsure residue" description="L or I" evidence="3">
    <location>
        <position position="3"/>
    </location>
</feature>
<feature type="unsure residue" description="L or I" evidence="3">
    <location>
        <position position="9"/>
    </location>
</feature>
<dbReference type="GO" id="GO:0005576">
    <property type="term" value="C:extracellular region"/>
    <property type="evidence" value="ECO:0007669"/>
    <property type="project" value="UniProtKB-SubCell"/>
</dbReference>
<dbReference type="GO" id="GO:0007218">
    <property type="term" value="P:neuropeptide signaling pathway"/>
    <property type="evidence" value="ECO:0007669"/>
    <property type="project" value="UniProtKB-KW"/>
</dbReference>
<evidence type="ECO:0000250" key="1">
    <source>
        <dbReference type="UniProtKB" id="P84352"/>
    </source>
</evidence>
<evidence type="ECO:0000255" key="2"/>
<evidence type="ECO:0000269" key="3">
    <source>
    </source>
</evidence>
<evidence type="ECO:0000303" key="4">
    <source>
    </source>
</evidence>
<evidence type="ECO:0000305" key="5"/>
<comment type="subcellular location">
    <subcellularLocation>
        <location evidence="1">Secreted</location>
    </subcellularLocation>
</comment>
<comment type="tissue specificity">
    <text evidence="3">Expressed in the CNS and abdominal perisympathetic organs (aPSO). Not expressed in the ring gland, midgut or thoracic perisympathetic organs (tPSO) (at protein level).</text>
</comment>
<comment type="developmental stage">
    <text evidence="3">Detected in larvae.</text>
</comment>
<comment type="mass spectrometry" mass="971.59" method="MALDI" evidence="3"/>
<comment type="similarity">
    <text evidence="2">Belongs to the periviscerokinin family.</text>
</comment>
<protein>
    <recommendedName>
        <fullName evidence="4">CAPA-Periviscerokinin-2</fullName>
        <shortName evidence="4">CAPA-PVK-2</shortName>
    </recommendedName>
</protein>
<sequence length="9" mass="972">AGLFAQPRL</sequence>
<proteinExistence type="evidence at protein level"/>
<keyword id="KW-0027">Amidation</keyword>
<keyword id="KW-0903">Direct protein sequencing</keyword>
<keyword id="KW-0527">Neuropeptide</keyword>
<keyword id="KW-0964">Secreted</keyword>
<name>PVK2_DELRA</name>
<organism>
    <name type="scientific">Delia radicum</name>
    <name type="common">Cabbage root fly</name>
    <name type="synonym">Anthomyia brassicae</name>
    <dbReference type="NCBI Taxonomy" id="30064"/>
    <lineage>
        <taxon>Eukaryota</taxon>
        <taxon>Metazoa</taxon>
        <taxon>Ecdysozoa</taxon>
        <taxon>Arthropoda</taxon>
        <taxon>Hexapoda</taxon>
        <taxon>Insecta</taxon>
        <taxon>Pterygota</taxon>
        <taxon>Neoptera</taxon>
        <taxon>Endopterygota</taxon>
        <taxon>Diptera</taxon>
        <taxon>Brachycera</taxon>
        <taxon>Muscomorpha</taxon>
        <taxon>Muscoidea</taxon>
        <taxon>Anthomyiidae</taxon>
        <taxon>Anthomyiinae</taxon>
        <taxon>Delia</taxon>
    </lineage>
</organism>
<accession>B3EWL4</accession>
<reference evidence="5" key="1">
    <citation type="journal article" date="2012" name="PLoS ONE">
        <title>Peptidomics of the agriculturally damaging larval stage of the cabbage root fly Delia radicum (Diptera: Anthomyiidae).</title>
        <authorList>
            <person name="Zoephel J."/>
            <person name="Reiher W."/>
            <person name="Rexer K.-H."/>
            <person name="Kahnt J."/>
            <person name="Wegener C."/>
        </authorList>
    </citation>
    <scope>PROTEIN SEQUENCE</scope>
    <scope>TISSUE SPECIFICITY</scope>
    <scope>DEVELOPMENTAL STAGE</scope>
    <scope>MASS SPECTROMETRY</scope>
    <scope>AMIDATION AT LEU-9</scope>
    <source>
        <tissue evidence="3">CNS</tissue>
    </source>
</reference>